<keyword id="KW-0067">ATP-binding</keyword>
<keyword id="KW-0963">Cytoplasm</keyword>
<keyword id="KW-0418">Kinase</keyword>
<keyword id="KW-0547">Nucleotide-binding</keyword>
<keyword id="KW-0597">Phosphoprotein</keyword>
<keyword id="KW-1185">Reference proteome</keyword>
<keyword id="KW-0723">Serine/threonine-protein kinase</keyword>
<keyword id="KW-0808">Transferase</keyword>
<dbReference type="EC" id="2.7.11.1"/>
<dbReference type="EMBL" id="AB074449">
    <property type="protein sequence ID" value="BAB72080.1"/>
    <property type="molecule type" value="mRNA"/>
</dbReference>
<dbReference type="RefSeq" id="NP_001306374.1">
    <property type="nucleotide sequence ID" value="NM_001319445.1"/>
</dbReference>
<dbReference type="SMR" id="Q8WP28"/>
<dbReference type="STRING" id="9541.ENSMFAP00000022651"/>
<dbReference type="eggNOG" id="KOG0667">
    <property type="taxonomic scope" value="Eukaryota"/>
</dbReference>
<dbReference type="Proteomes" id="UP000233100">
    <property type="component" value="Unplaced"/>
</dbReference>
<dbReference type="GO" id="GO:0005737">
    <property type="term" value="C:cytoplasm"/>
    <property type="evidence" value="ECO:0007669"/>
    <property type="project" value="UniProtKB-SubCell"/>
</dbReference>
<dbReference type="GO" id="GO:0005634">
    <property type="term" value="C:nucleus"/>
    <property type="evidence" value="ECO:0007669"/>
    <property type="project" value="TreeGrafter"/>
</dbReference>
<dbReference type="GO" id="GO:0005524">
    <property type="term" value="F:ATP binding"/>
    <property type="evidence" value="ECO:0007669"/>
    <property type="project" value="UniProtKB-KW"/>
</dbReference>
<dbReference type="GO" id="GO:0106310">
    <property type="term" value="F:protein serine kinase activity"/>
    <property type="evidence" value="ECO:0007669"/>
    <property type="project" value="RHEA"/>
</dbReference>
<dbReference type="GO" id="GO:0004674">
    <property type="term" value="F:protein serine/threonine kinase activity"/>
    <property type="evidence" value="ECO:0007669"/>
    <property type="project" value="UniProtKB-KW"/>
</dbReference>
<dbReference type="GO" id="GO:0004713">
    <property type="term" value="F:protein tyrosine kinase activity"/>
    <property type="evidence" value="ECO:0007669"/>
    <property type="project" value="TreeGrafter"/>
</dbReference>
<dbReference type="FunFam" id="1.10.510.10:FF:000029">
    <property type="entry name" value="Homeodomain-interacting protein kinase 2 isoform 1"/>
    <property type="match status" value="1"/>
</dbReference>
<dbReference type="Gene3D" id="3.30.200.20">
    <property type="entry name" value="Phosphorylase Kinase, domain 1"/>
    <property type="match status" value="1"/>
</dbReference>
<dbReference type="Gene3D" id="1.10.510.10">
    <property type="entry name" value="Transferase(Phosphotransferase) domain 1"/>
    <property type="match status" value="1"/>
</dbReference>
<dbReference type="InterPro" id="IPR011009">
    <property type="entry name" value="Kinase-like_dom_sf"/>
</dbReference>
<dbReference type="InterPro" id="IPR000719">
    <property type="entry name" value="Prot_kinase_dom"/>
</dbReference>
<dbReference type="InterPro" id="IPR017441">
    <property type="entry name" value="Protein_kinase_ATP_BS"/>
</dbReference>
<dbReference type="InterPro" id="IPR008271">
    <property type="entry name" value="Ser/Thr_kinase_AS"/>
</dbReference>
<dbReference type="InterPro" id="IPR050494">
    <property type="entry name" value="Ser_Thr_dual-spec_kinase"/>
</dbReference>
<dbReference type="PANTHER" id="PTHR24058">
    <property type="entry name" value="DUAL SPECIFICITY PROTEIN KINASE"/>
    <property type="match status" value="1"/>
</dbReference>
<dbReference type="PANTHER" id="PTHR24058:SF46">
    <property type="entry name" value="HOMEODOMAIN-INTERACTING PROTEIN KINASE 4"/>
    <property type="match status" value="1"/>
</dbReference>
<dbReference type="Pfam" id="PF00069">
    <property type="entry name" value="Pkinase"/>
    <property type="match status" value="1"/>
</dbReference>
<dbReference type="SMART" id="SM00220">
    <property type="entry name" value="S_TKc"/>
    <property type="match status" value="1"/>
</dbReference>
<dbReference type="SUPFAM" id="SSF56112">
    <property type="entry name" value="Protein kinase-like (PK-like)"/>
    <property type="match status" value="1"/>
</dbReference>
<dbReference type="PROSITE" id="PS00107">
    <property type="entry name" value="PROTEIN_KINASE_ATP"/>
    <property type="match status" value="1"/>
</dbReference>
<dbReference type="PROSITE" id="PS50011">
    <property type="entry name" value="PROTEIN_KINASE_DOM"/>
    <property type="match status" value="1"/>
</dbReference>
<dbReference type="PROSITE" id="PS00108">
    <property type="entry name" value="PROTEIN_KINASE_ST"/>
    <property type="match status" value="1"/>
</dbReference>
<protein>
    <recommendedName>
        <fullName>Homeodomain-interacting protein kinase 4</fullName>
        <ecNumber>2.7.11.1</ecNumber>
    </recommendedName>
</protein>
<comment type="function">
    <text evidence="1 6">Protein kinase that phosphorylates TP53, and thus induces TP53 repression of BIRC5 promoter (By similarity). May act as a corepressor of transcription factors (Potential).</text>
</comment>
<comment type="catalytic activity">
    <reaction>
        <text>L-seryl-[protein] + ATP = O-phospho-L-seryl-[protein] + ADP + H(+)</text>
        <dbReference type="Rhea" id="RHEA:17989"/>
        <dbReference type="Rhea" id="RHEA-COMP:9863"/>
        <dbReference type="Rhea" id="RHEA-COMP:11604"/>
        <dbReference type="ChEBI" id="CHEBI:15378"/>
        <dbReference type="ChEBI" id="CHEBI:29999"/>
        <dbReference type="ChEBI" id="CHEBI:30616"/>
        <dbReference type="ChEBI" id="CHEBI:83421"/>
        <dbReference type="ChEBI" id="CHEBI:456216"/>
        <dbReference type="EC" id="2.7.11.1"/>
    </reaction>
</comment>
<comment type="catalytic activity">
    <reaction>
        <text>L-threonyl-[protein] + ATP = O-phospho-L-threonyl-[protein] + ADP + H(+)</text>
        <dbReference type="Rhea" id="RHEA:46608"/>
        <dbReference type="Rhea" id="RHEA-COMP:11060"/>
        <dbReference type="Rhea" id="RHEA-COMP:11605"/>
        <dbReference type="ChEBI" id="CHEBI:15378"/>
        <dbReference type="ChEBI" id="CHEBI:30013"/>
        <dbReference type="ChEBI" id="CHEBI:30616"/>
        <dbReference type="ChEBI" id="CHEBI:61977"/>
        <dbReference type="ChEBI" id="CHEBI:456216"/>
        <dbReference type="EC" id="2.7.11.1"/>
    </reaction>
</comment>
<comment type="subcellular location">
    <subcellularLocation>
        <location evidence="1">Cytoplasm</location>
    </subcellularLocation>
</comment>
<comment type="PTM">
    <text evidence="1">Autophosphorylated.</text>
</comment>
<comment type="similarity">
    <text evidence="6">Belongs to the protein kinase superfamily. CMGC Ser/Thr protein kinase family. HIPK subfamily.</text>
</comment>
<organism>
    <name type="scientific">Macaca fascicularis</name>
    <name type="common">Crab-eating macaque</name>
    <name type="synonym">Cynomolgus monkey</name>
    <dbReference type="NCBI Taxonomy" id="9541"/>
    <lineage>
        <taxon>Eukaryota</taxon>
        <taxon>Metazoa</taxon>
        <taxon>Chordata</taxon>
        <taxon>Craniata</taxon>
        <taxon>Vertebrata</taxon>
        <taxon>Euteleostomi</taxon>
        <taxon>Mammalia</taxon>
        <taxon>Eutheria</taxon>
        <taxon>Euarchontoglires</taxon>
        <taxon>Primates</taxon>
        <taxon>Haplorrhini</taxon>
        <taxon>Catarrhini</taxon>
        <taxon>Cercopithecidae</taxon>
        <taxon>Cercopithecinae</taxon>
        <taxon>Macaca</taxon>
    </lineage>
</organism>
<evidence type="ECO:0000250" key="1"/>
<evidence type="ECO:0000250" key="2">
    <source>
        <dbReference type="UniProtKB" id="Q3V016"/>
    </source>
</evidence>
<evidence type="ECO:0000255" key="3">
    <source>
        <dbReference type="PROSITE-ProRule" id="PRU00159"/>
    </source>
</evidence>
<evidence type="ECO:0000255" key="4">
    <source>
        <dbReference type="PROSITE-ProRule" id="PRU10027"/>
    </source>
</evidence>
<evidence type="ECO:0000256" key="5">
    <source>
        <dbReference type="SAM" id="MobiDB-lite"/>
    </source>
</evidence>
<evidence type="ECO:0000305" key="6"/>
<name>HIPK4_MACFA</name>
<reference key="1">
    <citation type="journal article" date="2002" name="BMC Genomics">
        <title>Cynomolgus monkey testicular cDNAs for discovery of novel human genes in the human genome sequence.</title>
        <authorList>
            <person name="Osada N."/>
            <person name="Hida M."/>
            <person name="Kusuda J."/>
            <person name="Tanuma R."/>
            <person name="Hirata M."/>
            <person name="Suto Y."/>
            <person name="Hirai M."/>
            <person name="Terao K."/>
            <person name="Sugano S."/>
            <person name="Hashimoto K."/>
        </authorList>
    </citation>
    <scope>NUCLEOTIDE SEQUENCE [LARGE SCALE MRNA]</scope>
    <source>
        <tissue>Testis</tissue>
    </source>
</reference>
<gene>
    <name type="primary">HIPK4</name>
    <name type="ORF">QtsA-20664</name>
</gene>
<accession>Q8WP28</accession>
<sequence length="616" mass="69568">MATTQSETDCYDIIEVLGKGTFGEVAKGWRRSTGEMVAIKILKNDAYRNRIIKNELKLLHCMRGLDPEEAHVIRFLEFFHDALKFYLVFELLEQNLFEFQKENNFAPLPARHIRTVTLQVLRALARLKELAIIHADLKPENIMLVDQTRCPFRVKVIDFGSASIFSEVRYVKEPYIQSRFYRAPEILLGLPFCEKVDVWSLGCVMAELHLGWPLYPGNNEYDQVRYICETQGLPKPHLLHAARKAHHFFKRNPHPDAANPWQLKSSADYLAETKVRPLERRKYMLKSLDQIETVNGGSVASRLTFPDREALAEHADLKSMVELIKRMLTWESHERISPSAALRHPFVSMQQLRNAHETTHYYQLSLRSYRLSLQVEGKPPAPVVAAEDGTPYYRLAEEKEAAGMGSVASSSPFFREEKAPGMQRAIDQLDDLSLQEAGHGLWGETCTDVVSDMMAPLKAAITGRHMPDSGPEPILAFYSSRLAGRHKARKPPAGSKSDSNLSNLIRLSQVSPEDDRPCRGSSWEEGEHLGASAEPPAILQRDGDGPNIDNMTMEAERPDPELFDPSSCPGEWLSEPDWTLEGVRGPRAQGLPPRRSHQHGPPRGATSFLQHVTGHH</sequence>
<feature type="chain" id="PRO_0000232402" description="Homeodomain-interacting protein kinase 4">
    <location>
        <begin position="1"/>
        <end position="616"/>
    </location>
</feature>
<feature type="domain" description="Protein kinase" evidence="3">
    <location>
        <begin position="11"/>
        <end position="347"/>
    </location>
</feature>
<feature type="region of interest" description="Disordered" evidence="5">
    <location>
        <begin position="485"/>
        <end position="616"/>
    </location>
</feature>
<feature type="compositionally biased region" description="Polar residues" evidence="5">
    <location>
        <begin position="496"/>
        <end position="511"/>
    </location>
</feature>
<feature type="active site" description="Proton acceptor" evidence="3 4">
    <location>
        <position position="136"/>
    </location>
</feature>
<feature type="binding site" evidence="3">
    <location>
        <begin position="17"/>
        <end position="25"/>
    </location>
    <ligand>
        <name>ATP</name>
        <dbReference type="ChEBI" id="CHEBI:30616"/>
    </ligand>
</feature>
<feature type="binding site" evidence="3">
    <location>
        <position position="40"/>
    </location>
    <ligand>
        <name>ATP</name>
        <dbReference type="ChEBI" id="CHEBI:30616"/>
    </ligand>
</feature>
<feature type="modified residue" description="Phosphoserine" evidence="2">
    <location>
        <position position="511"/>
    </location>
</feature>
<proteinExistence type="evidence at transcript level"/>